<accession>P85179</accession>
<name>CYO16_VIOOD</name>
<organism>
    <name type="scientific">Viola odorata</name>
    <name type="common">Sweet violet</name>
    <dbReference type="NCBI Taxonomy" id="97441"/>
    <lineage>
        <taxon>Eukaryota</taxon>
        <taxon>Viridiplantae</taxon>
        <taxon>Streptophyta</taxon>
        <taxon>Embryophyta</taxon>
        <taxon>Tracheophyta</taxon>
        <taxon>Spermatophyta</taxon>
        <taxon>Magnoliopsida</taxon>
        <taxon>eudicotyledons</taxon>
        <taxon>Gunneridae</taxon>
        <taxon>Pentapetalae</taxon>
        <taxon>rosids</taxon>
        <taxon>fabids</taxon>
        <taxon>Malpighiales</taxon>
        <taxon>Violaceae</taxon>
        <taxon>Viola</taxon>
        <taxon>Viola subgen. Viola</taxon>
        <taxon>Viola sect. Viola</taxon>
        <taxon>Viola subsect. Viola</taxon>
    </lineage>
</organism>
<feature type="peptide" id="PRO_0000294945" description="Cycloviolacin-O16" evidence="2 3">
    <location>
        <begin position="1"/>
        <end position="29"/>
    </location>
</feature>
<feature type="disulfide bond" evidence="1 2">
    <location>
        <begin position="4"/>
        <end position="18"/>
    </location>
</feature>
<feature type="disulfide bond" evidence="1 2">
    <location>
        <begin position="8"/>
        <end position="20"/>
    </location>
</feature>
<feature type="disulfide bond" evidence="1 2">
    <location>
        <begin position="13"/>
        <end position="25"/>
    </location>
</feature>
<feature type="cross-link" description="Cyclopeptide (Gly-Asn)" evidence="3">
    <location>
        <begin position="1"/>
        <end position="29"/>
    </location>
</feature>
<sequence>GLPCGETCFTGKCYTPGCSCSYPICKKIN</sequence>
<keyword id="KW-0903">Direct protein sequencing</keyword>
<keyword id="KW-1015">Disulfide bond</keyword>
<keyword id="KW-0960">Knottin</keyword>
<keyword id="KW-0611">Plant defense</keyword>
<reference evidence="4" key="1">
    <citation type="journal article" date="2006" name="Biochem. J.">
        <title>A novel suite of cyclotides from Viola odorata: sequence variation and the implications for structure, function and stability.</title>
        <authorList>
            <person name="Ireland D.C."/>
            <person name="Colgrave M.L."/>
            <person name="Craik D.J."/>
        </authorList>
    </citation>
    <scope>PROTEIN SEQUENCE</scope>
    <scope>MASS SPECTROMETRY</scope>
</reference>
<comment type="function">
    <text evidence="4">Probably participates in a plant defense mechanism.</text>
</comment>
<comment type="domain">
    <text evidence="1">The presence of a 'disulfide through disulfide knot' structurally defines this protein as a knottin.</text>
</comment>
<comment type="PTM">
    <text evidence="2 3">This is a cyclic peptide.</text>
</comment>
<comment type="mass spectrometry"/>
<comment type="similarity">
    <text evidence="2">Belongs to the cyclotide family. Moebius subfamily.</text>
</comment>
<comment type="caution">
    <text evidence="3">This peptide is cyclic. The start position was chosen by similarity to OAK1 (kalata-B1) for which the DNA sequence is known.</text>
</comment>
<proteinExistence type="evidence at protein level"/>
<evidence type="ECO:0000250" key="1">
    <source>
        <dbReference type="UniProtKB" id="P83835"/>
    </source>
</evidence>
<evidence type="ECO:0000255" key="2">
    <source>
        <dbReference type="PROSITE-ProRule" id="PRU00395"/>
    </source>
</evidence>
<evidence type="ECO:0000269" key="3">
    <source>
    </source>
</evidence>
<evidence type="ECO:0000305" key="4"/>
<protein>
    <recommendedName>
        <fullName>Cycloviolacin-O16</fullName>
    </recommendedName>
</protein>
<dbReference type="SMR" id="P85179"/>
<dbReference type="GO" id="GO:0006952">
    <property type="term" value="P:defense response"/>
    <property type="evidence" value="ECO:0007669"/>
    <property type="project" value="UniProtKB-KW"/>
</dbReference>
<dbReference type="InterPro" id="IPR005535">
    <property type="entry name" value="Cyclotide"/>
</dbReference>
<dbReference type="InterPro" id="IPR012324">
    <property type="entry name" value="Cyclotide_moebius_CS"/>
</dbReference>
<dbReference type="InterPro" id="IPR036146">
    <property type="entry name" value="Cyclotide_sf"/>
</dbReference>
<dbReference type="Pfam" id="PF03784">
    <property type="entry name" value="Cyclotide"/>
    <property type="match status" value="1"/>
</dbReference>
<dbReference type="SUPFAM" id="SSF57038">
    <property type="entry name" value="Cyclotides"/>
    <property type="match status" value="1"/>
</dbReference>
<dbReference type="PROSITE" id="PS51052">
    <property type="entry name" value="CYCLOTIDE"/>
    <property type="match status" value="1"/>
</dbReference>
<dbReference type="PROSITE" id="PS60009">
    <property type="entry name" value="CYCLOTIDE_MOEBIUS"/>
    <property type="match status" value="1"/>
</dbReference>